<sequence length="308" mass="34005">MKVLLANPRGFCAGVDRAIEIVECALKLHGAPVYVRHEVVHNKFVVDGLKNKGAVFVEDIADVPNNQVVIFSAHGVSIAVRRQTHNIGAIIYDATCPLVTKVHKEVARKQKQNYQVILIGHKGHPEVEGTLGQSSESNCVQLVETIEDVERLNLSKNMSFSYTTQTTLSIDDTQSIIDYLKLRIPTIDMPKKDDICYATQNRQDAVKILMQFSSVLLILGSSNSSNSNRLREIAEKIGIPAYLIDGIDNIDELWFKGVDTIGVTAGASAPEVLVQEVVHYLRDKGATKVIEVGGVKENIHFPVPKELR</sequence>
<feature type="chain" id="PRO_1000021193" description="4-hydroxy-3-methylbut-2-enyl diphosphate reductase">
    <location>
        <begin position="1"/>
        <end position="308"/>
    </location>
</feature>
<feature type="active site" description="Proton donor" evidence="1">
    <location>
        <position position="126"/>
    </location>
</feature>
<feature type="binding site" evidence="1">
    <location>
        <position position="12"/>
    </location>
    <ligand>
        <name>[4Fe-4S] cluster</name>
        <dbReference type="ChEBI" id="CHEBI:49883"/>
    </ligand>
</feature>
<feature type="binding site" evidence="1">
    <location>
        <position position="41"/>
    </location>
    <ligand>
        <name>(2E)-4-hydroxy-3-methylbut-2-enyl diphosphate</name>
        <dbReference type="ChEBI" id="CHEBI:128753"/>
    </ligand>
</feature>
<feature type="binding site" evidence="1">
    <location>
        <position position="41"/>
    </location>
    <ligand>
        <name>dimethylallyl diphosphate</name>
        <dbReference type="ChEBI" id="CHEBI:57623"/>
    </ligand>
</feature>
<feature type="binding site" evidence="1">
    <location>
        <position position="41"/>
    </location>
    <ligand>
        <name>isopentenyl diphosphate</name>
        <dbReference type="ChEBI" id="CHEBI:128769"/>
    </ligand>
</feature>
<feature type="binding site" evidence="1">
    <location>
        <position position="74"/>
    </location>
    <ligand>
        <name>(2E)-4-hydroxy-3-methylbut-2-enyl diphosphate</name>
        <dbReference type="ChEBI" id="CHEBI:128753"/>
    </ligand>
</feature>
<feature type="binding site" evidence="1">
    <location>
        <position position="74"/>
    </location>
    <ligand>
        <name>dimethylallyl diphosphate</name>
        <dbReference type="ChEBI" id="CHEBI:57623"/>
    </ligand>
</feature>
<feature type="binding site" evidence="1">
    <location>
        <position position="74"/>
    </location>
    <ligand>
        <name>isopentenyl diphosphate</name>
        <dbReference type="ChEBI" id="CHEBI:128769"/>
    </ligand>
</feature>
<feature type="binding site" evidence="1">
    <location>
        <position position="96"/>
    </location>
    <ligand>
        <name>[4Fe-4S] cluster</name>
        <dbReference type="ChEBI" id="CHEBI:49883"/>
    </ligand>
</feature>
<feature type="binding site" evidence="1">
    <location>
        <position position="124"/>
    </location>
    <ligand>
        <name>(2E)-4-hydroxy-3-methylbut-2-enyl diphosphate</name>
        <dbReference type="ChEBI" id="CHEBI:128753"/>
    </ligand>
</feature>
<feature type="binding site" evidence="1">
    <location>
        <position position="124"/>
    </location>
    <ligand>
        <name>dimethylallyl diphosphate</name>
        <dbReference type="ChEBI" id="CHEBI:57623"/>
    </ligand>
</feature>
<feature type="binding site" evidence="1">
    <location>
        <position position="124"/>
    </location>
    <ligand>
        <name>isopentenyl diphosphate</name>
        <dbReference type="ChEBI" id="CHEBI:128769"/>
    </ligand>
</feature>
<feature type="binding site" evidence="1">
    <location>
        <position position="166"/>
    </location>
    <ligand>
        <name>(2E)-4-hydroxy-3-methylbut-2-enyl diphosphate</name>
        <dbReference type="ChEBI" id="CHEBI:128753"/>
    </ligand>
</feature>
<feature type="binding site" evidence="1">
    <location>
        <position position="196"/>
    </location>
    <ligand>
        <name>[4Fe-4S] cluster</name>
        <dbReference type="ChEBI" id="CHEBI:49883"/>
    </ligand>
</feature>
<feature type="binding site" evidence="1">
    <location>
        <position position="224"/>
    </location>
    <ligand>
        <name>(2E)-4-hydroxy-3-methylbut-2-enyl diphosphate</name>
        <dbReference type="ChEBI" id="CHEBI:128753"/>
    </ligand>
</feature>
<feature type="binding site" evidence="1">
    <location>
        <position position="224"/>
    </location>
    <ligand>
        <name>dimethylallyl diphosphate</name>
        <dbReference type="ChEBI" id="CHEBI:57623"/>
    </ligand>
</feature>
<feature type="binding site" evidence="1">
    <location>
        <position position="224"/>
    </location>
    <ligand>
        <name>isopentenyl diphosphate</name>
        <dbReference type="ChEBI" id="CHEBI:128769"/>
    </ligand>
</feature>
<feature type="binding site" evidence="1">
    <location>
        <position position="225"/>
    </location>
    <ligand>
        <name>(2E)-4-hydroxy-3-methylbut-2-enyl diphosphate</name>
        <dbReference type="ChEBI" id="CHEBI:128753"/>
    </ligand>
</feature>
<feature type="binding site" evidence="1">
    <location>
        <position position="225"/>
    </location>
    <ligand>
        <name>dimethylallyl diphosphate</name>
        <dbReference type="ChEBI" id="CHEBI:57623"/>
    </ligand>
</feature>
<feature type="binding site" evidence="1">
    <location>
        <position position="225"/>
    </location>
    <ligand>
        <name>isopentenyl diphosphate</name>
        <dbReference type="ChEBI" id="CHEBI:128769"/>
    </ligand>
</feature>
<feature type="binding site" evidence="1">
    <location>
        <position position="226"/>
    </location>
    <ligand>
        <name>(2E)-4-hydroxy-3-methylbut-2-enyl diphosphate</name>
        <dbReference type="ChEBI" id="CHEBI:128753"/>
    </ligand>
</feature>
<feature type="binding site" evidence="1">
    <location>
        <position position="226"/>
    </location>
    <ligand>
        <name>dimethylallyl diphosphate</name>
        <dbReference type="ChEBI" id="CHEBI:57623"/>
    </ligand>
</feature>
<feature type="binding site" evidence="1">
    <location>
        <position position="226"/>
    </location>
    <ligand>
        <name>isopentenyl diphosphate</name>
        <dbReference type="ChEBI" id="CHEBI:128769"/>
    </ligand>
</feature>
<feature type="binding site" evidence="1">
    <location>
        <position position="268"/>
    </location>
    <ligand>
        <name>(2E)-4-hydroxy-3-methylbut-2-enyl diphosphate</name>
        <dbReference type="ChEBI" id="CHEBI:128753"/>
    </ligand>
</feature>
<feature type="binding site" evidence="1">
    <location>
        <position position="268"/>
    </location>
    <ligand>
        <name>dimethylallyl diphosphate</name>
        <dbReference type="ChEBI" id="CHEBI:57623"/>
    </ligand>
</feature>
<feature type="binding site" evidence="1">
    <location>
        <position position="268"/>
    </location>
    <ligand>
        <name>isopentenyl diphosphate</name>
        <dbReference type="ChEBI" id="CHEBI:128769"/>
    </ligand>
</feature>
<evidence type="ECO:0000255" key="1">
    <source>
        <dbReference type="HAMAP-Rule" id="MF_00191"/>
    </source>
</evidence>
<name>ISPH_VESOH</name>
<proteinExistence type="inferred from homology"/>
<accession>A5CVK1</accession>
<comment type="function">
    <text evidence="1">Catalyzes the conversion of 1-hydroxy-2-methyl-2-(E)-butenyl 4-diphosphate (HMBPP) into a mixture of isopentenyl diphosphate (IPP) and dimethylallyl diphosphate (DMAPP). Acts in the terminal step of the DOXP/MEP pathway for isoprenoid precursor biosynthesis.</text>
</comment>
<comment type="catalytic activity">
    <reaction evidence="1">
        <text>isopentenyl diphosphate + 2 oxidized [2Fe-2S]-[ferredoxin] + H2O = (2E)-4-hydroxy-3-methylbut-2-enyl diphosphate + 2 reduced [2Fe-2S]-[ferredoxin] + 2 H(+)</text>
        <dbReference type="Rhea" id="RHEA:24488"/>
        <dbReference type="Rhea" id="RHEA-COMP:10000"/>
        <dbReference type="Rhea" id="RHEA-COMP:10001"/>
        <dbReference type="ChEBI" id="CHEBI:15377"/>
        <dbReference type="ChEBI" id="CHEBI:15378"/>
        <dbReference type="ChEBI" id="CHEBI:33737"/>
        <dbReference type="ChEBI" id="CHEBI:33738"/>
        <dbReference type="ChEBI" id="CHEBI:128753"/>
        <dbReference type="ChEBI" id="CHEBI:128769"/>
        <dbReference type="EC" id="1.17.7.4"/>
    </reaction>
</comment>
<comment type="catalytic activity">
    <reaction evidence="1">
        <text>dimethylallyl diphosphate + 2 oxidized [2Fe-2S]-[ferredoxin] + H2O = (2E)-4-hydroxy-3-methylbut-2-enyl diphosphate + 2 reduced [2Fe-2S]-[ferredoxin] + 2 H(+)</text>
        <dbReference type="Rhea" id="RHEA:24825"/>
        <dbReference type="Rhea" id="RHEA-COMP:10000"/>
        <dbReference type="Rhea" id="RHEA-COMP:10001"/>
        <dbReference type="ChEBI" id="CHEBI:15377"/>
        <dbReference type="ChEBI" id="CHEBI:15378"/>
        <dbReference type="ChEBI" id="CHEBI:33737"/>
        <dbReference type="ChEBI" id="CHEBI:33738"/>
        <dbReference type="ChEBI" id="CHEBI:57623"/>
        <dbReference type="ChEBI" id="CHEBI:128753"/>
        <dbReference type="EC" id="1.17.7.4"/>
    </reaction>
</comment>
<comment type="cofactor">
    <cofactor evidence="1">
        <name>[4Fe-4S] cluster</name>
        <dbReference type="ChEBI" id="CHEBI:49883"/>
    </cofactor>
    <text evidence="1">Binds 1 [4Fe-4S] cluster per subunit.</text>
</comment>
<comment type="pathway">
    <text evidence="1">Isoprenoid biosynthesis; dimethylallyl diphosphate biosynthesis; dimethylallyl diphosphate from (2E)-4-hydroxy-3-methylbutenyl diphosphate: step 1/1.</text>
</comment>
<comment type="pathway">
    <text evidence="1">Isoprenoid biosynthesis; isopentenyl diphosphate biosynthesis via DXP pathway; isopentenyl diphosphate from 1-deoxy-D-xylulose 5-phosphate: step 6/6.</text>
</comment>
<comment type="similarity">
    <text evidence="1">Belongs to the IspH family.</text>
</comment>
<dbReference type="EC" id="1.17.7.4" evidence="1"/>
<dbReference type="EMBL" id="AP009247">
    <property type="protein sequence ID" value="BAF62023.1"/>
    <property type="molecule type" value="Genomic_DNA"/>
</dbReference>
<dbReference type="RefSeq" id="WP_011930292.1">
    <property type="nucleotide sequence ID" value="NC_009465.1"/>
</dbReference>
<dbReference type="SMR" id="A5CVK1"/>
<dbReference type="STRING" id="412965.COSY_0924"/>
<dbReference type="KEGG" id="vok:COSY_0924"/>
<dbReference type="eggNOG" id="COG0761">
    <property type="taxonomic scope" value="Bacteria"/>
</dbReference>
<dbReference type="HOGENOM" id="CLU_027486_1_0_6"/>
<dbReference type="OrthoDB" id="9804068at2"/>
<dbReference type="UniPathway" id="UPA00056">
    <property type="reaction ID" value="UER00097"/>
</dbReference>
<dbReference type="UniPathway" id="UPA00059">
    <property type="reaction ID" value="UER00105"/>
</dbReference>
<dbReference type="Proteomes" id="UP000000247">
    <property type="component" value="Chromosome"/>
</dbReference>
<dbReference type="GO" id="GO:0051539">
    <property type="term" value="F:4 iron, 4 sulfur cluster binding"/>
    <property type="evidence" value="ECO:0007669"/>
    <property type="project" value="UniProtKB-UniRule"/>
</dbReference>
<dbReference type="GO" id="GO:0051745">
    <property type="term" value="F:4-hydroxy-3-methylbut-2-enyl diphosphate reductase activity"/>
    <property type="evidence" value="ECO:0007669"/>
    <property type="project" value="UniProtKB-UniRule"/>
</dbReference>
<dbReference type="GO" id="GO:0046872">
    <property type="term" value="F:metal ion binding"/>
    <property type="evidence" value="ECO:0007669"/>
    <property type="project" value="UniProtKB-KW"/>
</dbReference>
<dbReference type="GO" id="GO:0050992">
    <property type="term" value="P:dimethylallyl diphosphate biosynthetic process"/>
    <property type="evidence" value="ECO:0007669"/>
    <property type="project" value="UniProtKB-UniRule"/>
</dbReference>
<dbReference type="GO" id="GO:0019288">
    <property type="term" value="P:isopentenyl diphosphate biosynthetic process, methylerythritol 4-phosphate pathway"/>
    <property type="evidence" value="ECO:0007669"/>
    <property type="project" value="UniProtKB-UniRule"/>
</dbReference>
<dbReference type="GO" id="GO:0016114">
    <property type="term" value="P:terpenoid biosynthetic process"/>
    <property type="evidence" value="ECO:0007669"/>
    <property type="project" value="UniProtKB-UniRule"/>
</dbReference>
<dbReference type="CDD" id="cd13944">
    <property type="entry name" value="lytB_ispH"/>
    <property type="match status" value="1"/>
</dbReference>
<dbReference type="Gene3D" id="3.40.50.11270">
    <property type="match status" value="1"/>
</dbReference>
<dbReference type="Gene3D" id="3.40.1010.20">
    <property type="entry name" value="4-hydroxy-3-methylbut-2-enyl diphosphate reductase, catalytic domain"/>
    <property type="match status" value="2"/>
</dbReference>
<dbReference type="HAMAP" id="MF_00191">
    <property type="entry name" value="IspH"/>
    <property type="match status" value="1"/>
</dbReference>
<dbReference type="InterPro" id="IPR003451">
    <property type="entry name" value="LytB/IspH"/>
</dbReference>
<dbReference type="NCBIfam" id="TIGR00216">
    <property type="entry name" value="ispH_lytB"/>
    <property type="match status" value="1"/>
</dbReference>
<dbReference type="NCBIfam" id="NF002188">
    <property type="entry name" value="PRK01045.1-2"/>
    <property type="match status" value="1"/>
</dbReference>
<dbReference type="NCBIfam" id="NF002190">
    <property type="entry name" value="PRK01045.1-4"/>
    <property type="match status" value="1"/>
</dbReference>
<dbReference type="PANTHER" id="PTHR30426">
    <property type="entry name" value="4-HYDROXY-3-METHYLBUT-2-ENYL DIPHOSPHATE REDUCTASE"/>
    <property type="match status" value="1"/>
</dbReference>
<dbReference type="PANTHER" id="PTHR30426:SF0">
    <property type="entry name" value="4-HYDROXY-3-METHYLBUT-2-ENYL DIPHOSPHATE REDUCTASE"/>
    <property type="match status" value="1"/>
</dbReference>
<dbReference type="Pfam" id="PF02401">
    <property type="entry name" value="LYTB"/>
    <property type="match status" value="1"/>
</dbReference>
<reference key="1">
    <citation type="journal article" date="2007" name="Curr. Biol.">
        <title>Reduced genome of the thioautotrophic intracellular symbiont in a deep-sea clam, Calyptogena okutanii.</title>
        <authorList>
            <person name="Kuwahara H."/>
            <person name="Yoshida T."/>
            <person name="Takaki Y."/>
            <person name="Shimamura S."/>
            <person name="Nishi S."/>
            <person name="Harada M."/>
            <person name="Matsuyama K."/>
            <person name="Takishita K."/>
            <person name="Kawato M."/>
            <person name="Uematsu K."/>
            <person name="Fujiwara Y."/>
            <person name="Sato T."/>
            <person name="Kato C."/>
            <person name="Kitagawa M."/>
            <person name="Kato I."/>
            <person name="Maruyama T."/>
        </authorList>
    </citation>
    <scope>NUCLEOTIDE SEQUENCE [LARGE SCALE GENOMIC DNA]</scope>
    <source>
        <strain>HA</strain>
    </source>
</reference>
<keyword id="KW-0004">4Fe-4S</keyword>
<keyword id="KW-0408">Iron</keyword>
<keyword id="KW-0411">Iron-sulfur</keyword>
<keyword id="KW-0414">Isoprene biosynthesis</keyword>
<keyword id="KW-0479">Metal-binding</keyword>
<keyword id="KW-0560">Oxidoreductase</keyword>
<keyword id="KW-1185">Reference proteome</keyword>
<protein>
    <recommendedName>
        <fullName evidence="1">4-hydroxy-3-methylbut-2-enyl diphosphate reductase</fullName>
        <shortName evidence="1">HMBPP reductase</shortName>
        <ecNumber evidence="1">1.17.7.4</ecNumber>
    </recommendedName>
</protein>
<gene>
    <name evidence="1" type="primary">ispH</name>
    <name type="ordered locus">COSY_0924</name>
</gene>
<organism>
    <name type="scientific">Vesicomyosocius okutanii subsp. Calyptogena okutanii (strain HA)</name>
    <dbReference type="NCBI Taxonomy" id="412965"/>
    <lineage>
        <taxon>Bacteria</taxon>
        <taxon>Pseudomonadati</taxon>
        <taxon>Pseudomonadota</taxon>
        <taxon>Gammaproteobacteria</taxon>
        <taxon>Candidatus Pseudothioglobaceae</taxon>
        <taxon>Candidatus Vesicomyosocius</taxon>
    </lineage>
</organism>